<proteinExistence type="evidence at transcript level"/>
<name>ZEA3_MAIZE</name>
<accession>P06674</accession>
<organism>
    <name type="scientific">Zea mays</name>
    <name type="common">Maize</name>
    <dbReference type="NCBI Taxonomy" id="4577"/>
    <lineage>
        <taxon>Eukaryota</taxon>
        <taxon>Viridiplantae</taxon>
        <taxon>Streptophyta</taxon>
        <taxon>Embryophyta</taxon>
        <taxon>Tracheophyta</taxon>
        <taxon>Spermatophyta</taxon>
        <taxon>Magnoliopsida</taxon>
        <taxon>Liliopsida</taxon>
        <taxon>Poales</taxon>
        <taxon>Poaceae</taxon>
        <taxon>PACMAD clade</taxon>
        <taxon>Panicoideae</taxon>
        <taxon>Andropogonodae</taxon>
        <taxon>Andropogoneae</taxon>
        <taxon>Tripsacinae</taxon>
        <taxon>Zea</taxon>
    </lineage>
</organism>
<reference key="1">
    <citation type="journal article" date="1985" name="J. Biol. Chem.">
        <title>Nucleotide sequence analysis of zein mRNAs from maize endosperm.</title>
        <authorList>
            <person name="Marks M.D."/>
            <person name="Lindell J.S."/>
            <person name="Larkins B.A."/>
        </authorList>
    </citation>
    <scope>NUCLEOTIDE SEQUENCE [MRNA]</scope>
</reference>
<feature type="signal peptide">
    <location>
        <begin position="1" status="less than"/>
        <end position="18"/>
    </location>
</feature>
<feature type="chain" id="PRO_0000041613" description="Zein-alpha 19A2">
    <location>
        <begin position="19"/>
        <end position="230"/>
    </location>
</feature>
<feature type="non-terminal residue">
    <location>
        <position position="1"/>
    </location>
</feature>
<evidence type="ECO:0000250" key="1">
    <source>
        <dbReference type="UniProtKB" id="P04698"/>
    </source>
</evidence>
<evidence type="ECO:0000305" key="2"/>
<protein>
    <recommendedName>
        <fullName>Zein-alpha 19A2</fullName>
    </recommendedName>
    <alternativeName>
        <fullName>19 kDa zein 19A2</fullName>
    </alternativeName>
</protein>
<dbReference type="EMBL" id="M12142">
    <property type="protein sequence ID" value="AAA33525.1"/>
    <property type="molecule type" value="mRNA"/>
</dbReference>
<dbReference type="PIR" id="D24557">
    <property type="entry name" value="ZIZMA2"/>
</dbReference>
<dbReference type="STRING" id="4577.P06674"/>
<dbReference type="PaxDb" id="4577-GRMZM2G008341_P01"/>
<dbReference type="MaizeGDB" id="58096"/>
<dbReference type="eggNOG" id="ENOG502R4CQ">
    <property type="taxonomic scope" value="Eukaryota"/>
</dbReference>
<dbReference type="InParanoid" id="P06674"/>
<dbReference type="Proteomes" id="UP000007305">
    <property type="component" value="Unplaced"/>
</dbReference>
<dbReference type="ExpressionAtlas" id="P06674">
    <property type="expression patterns" value="baseline and differential"/>
</dbReference>
<dbReference type="GO" id="GO:0045735">
    <property type="term" value="F:nutrient reservoir activity"/>
    <property type="evidence" value="ECO:0007669"/>
    <property type="project" value="UniProtKB-KW"/>
</dbReference>
<dbReference type="InterPro" id="IPR002530">
    <property type="entry name" value="Zein"/>
</dbReference>
<dbReference type="InterPro" id="IPR051903">
    <property type="entry name" value="Zein-alpha"/>
</dbReference>
<dbReference type="PANTHER" id="PTHR48214">
    <property type="entry name" value="ZEIN-ALPHA PMS2"/>
    <property type="match status" value="1"/>
</dbReference>
<dbReference type="PANTHER" id="PTHR48214:SF1">
    <property type="entry name" value="ZEIN-ALPHA PMS2"/>
    <property type="match status" value="1"/>
</dbReference>
<dbReference type="Pfam" id="PF01559">
    <property type="entry name" value="Zein"/>
    <property type="match status" value="2"/>
</dbReference>
<comment type="function">
    <text>Zeins are major seed storage proteins.</text>
</comment>
<comment type="miscellaneous">
    <text>The alpha zeins of 19 kDa and 22 kDa account for 70% of the total zein fraction. They are encoded by a large multigene family.</text>
</comment>
<comment type="miscellaneous">
    <text evidence="1">Structurally, 22K and 19K zeins are composed of nine adjacent, topologically antiparallel helices clustered within a distorted cylinder.</text>
</comment>
<comment type="similarity">
    <text evidence="2">Belongs to the zein family.</text>
</comment>
<sequence length="230" mass="25032">KIFCFLMLLGLSASAATATIFPQCSQAPITSLLPPYLSPAVSSVCENPILQPYRIQQAIAAGILPLSPLFLQQPSALLQQLPLVHLLAQNIRAQQLQQLVLGNLAAYSQQHQFLPFNQLAALNSAAYLQQQLPFSQLAAAYPQQFLPFNQLAALNSAAYLQQQQLPPFSQLADVSPAAFLTQQQLLPFYLHAAPNAGTVLQLQQLLPFDQLALTNPTAFYQQPIIGGALF</sequence>
<keyword id="KW-1185">Reference proteome</keyword>
<keyword id="KW-0677">Repeat</keyword>
<keyword id="KW-0708">Seed storage protein</keyword>
<keyword id="KW-0732">Signal</keyword>
<keyword id="KW-0758">Storage protein</keyword>